<comment type="function">
    <text evidence="1">Involved in beta-(1--&gt;2)glucan export. Transmembrane domains (TMD) form a pore in the inner membrane and the ATP-binding domain (NBD) is responsible for energy generation (By similarity).</text>
</comment>
<comment type="catalytic activity">
    <reaction evidence="2">
        <text>[(1-&gt;2)-beta-D-glucosyl](n)(in) + ATP + H2O = [(1-&gt;2)-beta-D-glucosyl](n)(out) + ADP + phosphate + H(+)</text>
        <dbReference type="Rhea" id="RHEA:18453"/>
        <dbReference type="Rhea" id="RHEA-COMP:11881"/>
        <dbReference type="ChEBI" id="CHEBI:15377"/>
        <dbReference type="ChEBI" id="CHEBI:15378"/>
        <dbReference type="ChEBI" id="CHEBI:27517"/>
        <dbReference type="ChEBI" id="CHEBI:30616"/>
        <dbReference type="ChEBI" id="CHEBI:43474"/>
        <dbReference type="ChEBI" id="CHEBI:456216"/>
        <dbReference type="EC" id="7.5.2.3"/>
    </reaction>
</comment>
<comment type="subunit">
    <text evidence="2">Homodimer.</text>
</comment>
<comment type="subcellular location">
    <subcellularLocation>
        <location evidence="2">Cell inner membrane</location>
        <topology evidence="2">Multi-pass membrane protein</topology>
    </subcellularLocation>
</comment>
<comment type="domain">
    <text>In NdvA the ATP-binding domain (NBD) and the transmembrane domain (TMD) are fused.</text>
</comment>
<comment type="similarity">
    <text evidence="2">Belongs to the ABC transporter superfamily. Beta-(1--&gt;2)glucan exporter (TC 3.A.1.108.1) family.</text>
</comment>
<organism>
    <name type="scientific">Mesorhizobium japonicum (strain LMG 29417 / CECT 9101 / MAFF 303099)</name>
    <name type="common">Mesorhizobium loti (strain MAFF 303099)</name>
    <dbReference type="NCBI Taxonomy" id="266835"/>
    <lineage>
        <taxon>Bacteria</taxon>
        <taxon>Pseudomonadati</taxon>
        <taxon>Pseudomonadota</taxon>
        <taxon>Alphaproteobacteria</taxon>
        <taxon>Hyphomicrobiales</taxon>
        <taxon>Phyllobacteriaceae</taxon>
        <taxon>Mesorhizobium</taxon>
    </lineage>
</organism>
<evidence type="ECO:0000250" key="1"/>
<evidence type="ECO:0000255" key="2">
    <source>
        <dbReference type="HAMAP-Rule" id="MF_01728"/>
    </source>
</evidence>
<protein>
    <recommendedName>
        <fullName evidence="2">Beta-(1--&gt;2)glucan export ATP-binding/permease protein NdvA</fullName>
        <ecNumber evidence="2">7.5.2.3</ecNumber>
    </recommendedName>
</protein>
<accession>Q983H5</accession>
<gene>
    <name evidence="2" type="primary">ndvA</name>
    <name type="ordered locus">mlr8326</name>
</gene>
<proteinExistence type="inferred from homology"/>
<reference key="1">
    <citation type="journal article" date="2000" name="DNA Res.">
        <title>Complete genome structure of the nitrogen-fixing symbiotic bacterium Mesorhizobium loti.</title>
        <authorList>
            <person name="Kaneko T."/>
            <person name="Nakamura Y."/>
            <person name="Sato S."/>
            <person name="Asamizu E."/>
            <person name="Kato T."/>
            <person name="Sasamoto S."/>
            <person name="Watanabe A."/>
            <person name="Idesawa K."/>
            <person name="Ishikawa A."/>
            <person name="Kawashima K."/>
            <person name="Kimura T."/>
            <person name="Kishida Y."/>
            <person name="Kiyokawa C."/>
            <person name="Kohara M."/>
            <person name="Matsumoto M."/>
            <person name="Matsuno A."/>
            <person name="Mochizuki Y."/>
            <person name="Nakayama S."/>
            <person name="Nakazaki N."/>
            <person name="Shimpo S."/>
            <person name="Sugimoto M."/>
            <person name="Takeuchi C."/>
            <person name="Yamada M."/>
            <person name="Tabata S."/>
        </authorList>
    </citation>
    <scope>NUCLEOTIDE SEQUENCE [LARGE SCALE GENOMIC DNA]</scope>
    <source>
        <strain>LMG 29417 / CECT 9101 / MAFF 303099</strain>
    </source>
</reference>
<dbReference type="EC" id="7.5.2.3" evidence="2"/>
<dbReference type="EMBL" id="BA000012">
    <property type="protein sequence ID" value="BAB53906.1"/>
    <property type="molecule type" value="Genomic_DNA"/>
</dbReference>
<dbReference type="RefSeq" id="WP_010915532.1">
    <property type="nucleotide sequence ID" value="NC_002678.2"/>
</dbReference>
<dbReference type="SMR" id="Q983H5"/>
<dbReference type="KEGG" id="mlo:mlr8326"/>
<dbReference type="PATRIC" id="fig|266835.9.peg.6652"/>
<dbReference type="eggNOG" id="COG1132">
    <property type="taxonomic scope" value="Bacteria"/>
</dbReference>
<dbReference type="HOGENOM" id="CLU_000604_84_3_5"/>
<dbReference type="Proteomes" id="UP000000552">
    <property type="component" value="Chromosome"/>
</dbReference>
<dbReference type="GO" id="GO:0005886">
    <property type="term" value="C:plasma membrane"/>
    <property type="evidence" value="ECO:0007669"/>
    <property type="project" value="UniProtKB-SubCell"/>
</dbReference>
<dbReference type="GO" id="GO:0015441">
    <property type="term" value="F:ABC-type beta-glucan transporter activity"/>
    <property type="evidence" value="ECO:0007669"/>
    <property type="project" value="UniProtKB-EC"/>
</dbReference>
<dbReference type="GO" id="GO:0005524">
    <property type="term" value="F:ATP binding"/>
    <property type="evidence" value="ECO:0007669"/>
    <property type="project" value="UniProtKB-KW"/>
</dbReference>
<dbReference type="GO" id="GO:0016887">
    <property type="term" value="F:ATP hydrolysis activity"/>
    <property type="evidence" value="ECO:0007669"/>
    <property type="project" value="InterPro"/>
</dbReference>
<dbReference type="GO" id="GO:0034040">
    <property type="term" value="F:ATPase-coupled lipid transmembrane transporter activity"/>
    <property type="evidence" value="ECO:0007669"/>
    <property type="project" value="TreeGrafter"/>
</dbReference>
<dbReference type="CDD" id="cd18562">
    <property type="entry name" value="ABC_6TM_NdvA_beta-glucan_exporter_like"/>
    <property type="match status" value="1"/>
</dbReference>
<dbReference type="FunFam" id="3.40.50.300:FF:000221">
    <property type="entry name" value="Multidrug ABC transporter ATP-binding protein"/>
    <property type="match status" value="1"/>
</dbReference>
<dbReference type="Gene3D" id="1.20.1560.10">
    <property type="entry name" value="ABC transporter type 1, transmembrane domain"/>
    <property type="match status" value="1"/>
</dbReference>
<dbReference type="Gene3D" id="3.40.50.300">
    <property type="entry name" value="P-loop containing nucleotide triphosphate hydrolases"/>
    <property type="match status" value="1"/>
</dbReference>
<dbReference type="InterPro" id="IPR003593">
    <property type="entry name" value="AAA+_ATPase"/>
</dbReference>
<dbReference type="InterPro" id="IPR011527">
    <property type="entry name" value="ABC1_TM_dom"/>
</dbReference>
<dbReference type="InterPro" id="IPR036640">
    <property type="entry name" value="ABC1_TM_sf"/>
</dbReference>
<dbReference type="InterPro" id="IPR003439">
    <property type="entry name" value="ABC_transporter-like_ATP-bd"/>
</dbReference>
<dbReference type="InterPro" id="IPR017871">
    <property type="entry name" value="ABC_transporter-like_CS"/>
</dbReference>
<dbReference type="InterPro" id="IPR005896">
    <property type="entry name" value="NdvA"/>
</dbReference>
<dbReference type="InterPro" id="IPR027417">
    <property type="entry name" value="P-loop_NTPase"/>
</dbReference>
<dbReference type="InterPro" id="IPR039421">
    <property type="entry name" value="Type_1_exporter"/>
</dbReference>
<dbReference type="NCBIfam" id="TIGR01192">
    <property type="entry name" value="chvA"/>
    <property type="match status" value="1"/>
</dbReference>
<dbReference type="NCBIfam" id="NF010178">
    <property type="entry name" value="PRK13657.1"/>
    <property type="match status" value="1"/>
</dbReference>
<dbReference type="PANTHER" id="PTHR24221">
    <property type="entry name" value="ATP-BINDING CASSETTE SUB-FAMILY B"/>
    <property type="match status" value="1"/>
</dbReference>
<dbReference type="PANTHER" id="PTHR24221:SF654">
    <property type="entry name" value="ATP-BINDING CASSETTE SUB-FAMILY B MEMBER 6"/>
    <property type="match status" value="1"/>
</dbReference>
<dbReference type="Pfam" id="PF00664">
    <property type="entry name" value="ABC_membrane"/>
    <property type="match status" value="1"/>
</dbReference>
<dbReference type="Pfam" id="PF00005">
    <property type="entry name" value="ABC_tran"/>
    <property type="match status" value="1"/>
</dbReference>
<dbReference type="SMART" id="SM00382">
    <property type="entry name" value="AAA"/>
    <property type="match status" value="1"/>
</dbReference>
<dbReference type="SUPFAM" id="SSF90123">
    <property type="entry name" value="ABC transporter transmembrane region"/>
    <property type="match status" value="1"/>
</dbReference>
<dbReference type="SUPFAM" id="SSF52540">
    <property type="entry name" value="P-loop containing nucleoside triphosphate hydrolases"/>
    <property type="match status" value="1"/>
</dbReference>
<dbReference type="PROSITE" id="PS50929">
    <property type="entry name" value="ABC_TM1F"/>
    <property type="match status" value="1"/>
</dbReference>
<dbReference type="PROSITE" id="PS00211">
    <property type="entry name" value="ABC_TRANSPORTER_1"/>
    <property type="match status" value="1"/>
</dbReference>
<dbReference type="PROSITE" id="PS50893">
    <property type="entry name" value="ABC_TRANSPORTER_2"/>
    <property type="match status" value="1"/>
</dbReference>
<dbReference type="PROSITE" id="PS51317">
    <property type="entry name" value="NDVA"/>
    <property type="match status" value="1"/>
</dbReference>
<name>NDVA_RHILO</name>
<keyword id="KW-0067">ATP-binding</keyword>
<keyword id="KW-0997">Cell inner membrane</keyword>
<keyword id="KW-1003">Cell membrane</keyword>
<keyword id="KW-0472">Membrane</keyword>
<keyword id="KW-0547">Nucleotide-binding</keyword>
<keyword id="KW-0762">Sugar transport</keyword>
<keyword id="KW-1278">Translocase</keyword>
<keyword id="KW-0812">Transmembrane</keyword>
<keyword id="KW-1133">Transmembrane helix</keyword>
<keyword id="KW-0813">Transport</keyword>
<feature type="chain" id="PRO_0000290252" description="Beta-(1--&gt;2)glucan export ATP-binding/permease protein NdvA">
    <location>
        <begin position="1"/>
        <end position="590"/>
    </location>
</feature>
<feature type="transmembrane region" description="Helical" evidence="2">
    <location>
        <begin position="22"/>
        <end position="42"/>
    </location>
</feature>
<feature type="transmembrane region" description="Helical" evidence="2">
    <location>
        <begin position="55"/>
        <end position="75"/>
    </location>
</feature>
<feature type="transmembrane region" description="Helical" evidence="2">
    <location>
        <begin position="136"/>
        <end position="156"/>
    </location>
</feature>
<feature type="transmembrane region" description="Helical" evidence="2">
    <location>
        <begin position="158"/>
        <end position="178"/>
    </location>
</feature>
<feature type="transmembrane region" description="Helical" evidence="2">
    <location>
        <begin position="248"/>
        <end position="268"/>
    </location>
</feature>
<feature type="transmembrane region" description="Helical" evidence="2">
    <location>
        <begin position="275"/>
        <end position="295"/>
    </location>
</feature>
<feature type="domain" description="ABC transmembrane type-1" evidence="2">
    <location>
        <begin position="21"/>
        <end position="301"/>
    </location>
</feature>
<feature type="domain" description="ABC transporter" evidence="2">
    <location>
        <begin position="335"/>
        <end position="569"/>
    </location>
</feature>
<feature type="binding site" evidence="2">
    <location>
        <begin position="368"/>
        <end position="375"/>
    </location>
    <ligand>
        <name>ATP</name>
        <dbReference type="ChEBI" id="CHEBI:30616"/>
    </ligand>
</feature>
<sequence>MSLLQIYWRALGYLAADKRRVALICGANVALAAIAILEPIMFGRVIDAISEHGSVFSTLAVWAGLGAFNVIAFVLVARGADRFAHARRSEVLCQSFERVITMPLAWHHQRGTSNALHTLLRAVETLFSLWLEFMRQHLSTAVALVLLVPTALSMDVRMSMVLLGLGVLYVGIGRLVMKRTKAGQAAVERHYHKVFAHVTDSVSNVAVLQSYNRLGHEAETLRRYVKNLLDAQNPVLDWWAIANALNRLSSTISMMVVLLIGAYLVTHGQLRVGDVIAFTGFATLLISRLDQMSAFANQISEARAKLEEFYKLEDSAADAAEPDGLRDLTNVTGHVRFEDVGFEFANSGQGVSGVSFEVQAGQTVAIVGPTGAGKTTLINLLQRVFSPSTGRILIDGIDTRTVTRKSLRHSIATVFQDAGLLNRSIEDNIRVGRADASNVEIHAAAVAAAAQDFILAKSGGYDTVVGERGGQLSGGERQRIAIARAVLKDAPILVLDEATSALDVETEDRVKEAIDELRRDRTTFIIAHRLTTVRDADLVVFMDKGRVVEMGGFAELSLRNGRFASLLRAGGLLNDEEVRRLSRSVQGEAA</sequence>